<protein>
    <recommendedName>
        <fullName evidence="1">HTH-type transcriptional regulator UlaR</fullName>
    </recommendedName>
</protein>
<proteinExistence type="inferred from homology"/>
<sequence>MTEAQRHQILLEMLAQLGFVTVEKVVERLGISPATARRDINKLGESGKLKKVRNGAEAITQQRPRWTPMNLHQAQNHDEKVRIAKAASQLVNPGESVVINCGSTAFLLGREMCGKPVQIITNYLPLANYLIDQEHDSVIIMGGQYNKSQSITLSPQGSENSLYAGHWMFTSGKGLTAEGLYKTDMLTAMAEQKMLSVVGKLVVLVDSSKIGERAGMLFSRADQIDMLITGKNANPEILQQLEAQGVSILRV</sequence>
<gene>
    <name evidence="1" type="primary">ulaR</name>
    <name type="ordered locus">SF4346</name>
    <name type="ordered locus">S4616</name>
</gene>
<comment type="function">
    <text evidence="1">Represses ulaG and the ulaABCDEF operon.</text>
</comment>
<comment type="subcellular location">
    <subcellularLocation>
        <location evidence="1">Cytoplasm</location>
    </subcellularLocation>
</comment>
<evidence type="ECO:0000255" key="1">
    <source>
        <dbReference type="HAMAP-Rule" id="MF_01563"/>
    </source>
</evidence>
<name>ULAR_SHIFL</name>
<keyword id="KW-0963">Cytoplasm</keyword>
<keyword id="KW-0238">DNA-binding</keyword>
<keyword id="KW-1185">Reference proteome</keyword>
<keyword id="KW-0678">Repressor</keyword>
<keyword id="KW-0804">Transcription</keyword>
<keyword id="KW-0805">Transcription regulation</keyword>
<dbReference type="EMBL" id="AE005674">
    <property type="protein sequence ID" value="AAN45763.2"/>
    <property type="molecule type" value="Genomic_DNA"/>
</dbReference>
<dbReference type="EMBL" id="AE014073">
    <property type="protein sequence ID" value="AAP19545.1"/>
    <property type="molecule type" value="Genomic_DNA"/>
</dbReference>
<dbReference type="RefSeq" id="WP_000133645.1">
    <property type="nucleotide sequence ID" value="NZ_WPGW01000113.1"/>
</dbReference>
<dbReference type="SMR" id="Q83P30"/>
<dbReference type="STRING" id="198214.SF4346"/>
<dbReference type="PaxDb" id="198214-SF4346"/>
<dbReference type="KEGG" id="sfl:SF4346"/>
<dbReference type="KEGG" id="sfx:S4616"/>
<dbReference type="PATRIC" id="fig|198214.7.peg.5125"/>
<dbReference type="HOGENOM" id="CLU_060699_3_2_6"/>
<dbReference type="Proteomes" id="UP000001006">
    <property type="component" value="Chromosome"/>
</dbReference>
<dbReference type="Proteomes" id="UP000002673">
    <property type="component" value="Chromosome"/>
</dbReference>
<dbReference type="GO" id="GO:0005737">
    <property type="term" value="C:cytoplasm"/>
    <property type="evidence" value="ECO:0007669"/>
    <property type="project" value="UniProtKB-SubCell"/>
</dbReference>
<dbReference type="GO" id="GO:0003677">
    <property type="term" value="F:DNA binding"/>
    <property type="evidence" value="ECO:0007669"/>
    <property type="project" value="UniProtKB-KW"/>
</dbReference>
<dbReference type="GO" id="GO:0003700">
    <property type="term" value="F:DNA-binding transcription factor activity"/>
    <property type="evidence" value="ECO:0007669"/>
    <property type="project" value="InterPro"/>
</dbReference>
<dbReference type="GO" id="GO:0045892">
    <property type="term" value="P:negative regulation of DNA-templated transcription"/>
    <property type="evidence" value="ECO:0007669"/>
    <property type="project" value="UniProtKB-UniRule"/>
</dbReference>
<dbReference type="FunFam" id="1.10.10.10:FF:000160">
    <property type="entry name" value="HTH-type transcriptional regulator UlaR"/>
    <property type="match status" value="1"/>
</dbReference>
<dbReference type="Gene3D" id="1.10.10.10">
    <property type="entry name" value="Winged helix-like DNA-binding domain superfamily/Winged helix DNA-binding domain"/>
    <property type="match status" value="1"/>
</dbReference>
<dbReference type="HAMAP" id="MF_01563">
    <property type="entry name" value="HTH_type_UlaR"/>
    <property type="match status" value="1"/>
</dbReference>
<dbReference type="InterPro" id="IPR050313">
    <property type="entry name" value="Carb_Metab_HTH_regulators"/>
</dbReference>
<dbReference type="InterPro" id="IPR014036">
    <property type="entry name" value="DeoR-like_C"/>
</dbReference>
<dbReference type="InterPro" id="IPR001034">
    <property type="entry name" value="DeoR_HTH"/>
</dbReference>
<dbReference type="InterPro" id="IPR037171">
    <property type="entry name" value="NagB/RpiA_transferase-like"/>
</dbReference>
<dbReference type="InterPro" id="IPR018356">
    <property type="entry name" value="Tscrpt_reg_HTH_DeoR_CS"/>
</dbReference>
<dbReference type="InterPro" id="IPR023711">
    <property type="entry name" value="Tscrpt_reg_HTH_UlaR"/>
</dbReference>
<dbReference type="InterPro" id="IPR036388">
    <property type="entry name" value="WH-like_DNA-bd_sf"/>
</dbReference>
<dbReference type="InterPro" id="IPR036390">
    <property type="entry name" value="WH_DNA-bd_sf"/>
</dbReference>
<dbReference type="NCBIfam" id="NF010034">
    <property type="entry name" value="PRK13509.1"/>
    <property type="match status" value="1"/>
</dbReference>
<dbReference type="PANTHER" id="PTHR30363">
    <property type="entry name" value="HTH-TYPE TRANSCRIPTIONAL REGULATOR SRLR-RELATED"/>
    <property type="match status" value="1"/>
</dbReference>
<dbReference type="PANTHER" id="PTHR30363:SF55">
    <property type="entry name" value="HTH-TYPE TRANSCRIPTIONAL REGULATOR ULAR"/>
    <property type="match status" value="1"/>
</dbReference>
<dbReference type="Pfam" id="PF00455">
    <property type="entry name" value="DeoRC"/>
    <property type="match status" value="1"/>
</dbReference>
<dbReference type="Pfam" id="PF08220">
    <property type="entry name" value="HTH_DeoR"/>
    <property type="match status" value="1"/>
</dbReference>
<dbReference type="PRINTS" id="PR00037">
    <property type="entry name" value="HTHLACR"/>
</dbReference>
<dbReference type="SMART" id="SM01134">
    <property type="entry name" value="DeoRC"/>
    <property type="match status" value="1"/>
</dbReference>
<dbReference type="SMART" id="SM00420">
    <property type="entry name" value="HTH_DEOR"/>
    <property type="match status" value="1"/>
</dbReference>
<dbReference type="SUPFAM" id="SSF100950">
    <property type="entry name" value="NagB/RpiA/CoA transferase-like"/>
    <property type="match status" value="1"/>
</dbReference>
<dbReference type="SUPFAM" id="SSF46785">
    <property type="entry name" value="Winged helix' DNA-binding domain"/>
    <property type="match status" value="1"/>
</dbReference>
<dbReference type="PROSITE" id="PS00894">
    <property type="entry name" value="HTH_DEOR_1"/>
    <property type="match status" value="1"/>
</dbReference>
<dbReference type="PROSITE" id="PS51000">
    <property type="entry name" value="HTH_DEOR_2"/>
    <property type="match status" value="1"/>
</dbReference>
<reference key="1">
    <citation type="journal article" date="2002" name="Nucleic Acids Res.">
        <title>Genome sequence of Shigella flexneri 2a: insights into pathogenicity through comparison with genomes of Escherichia coli K12 and O157.</title>
        <authorList>
            <person name="Jin Q."/>
            <person name="Yuan Z."/>
            <person name="Xu J."/>
            <person name="Wang Y."/>
            <person name="Shen Y."/>
            <person name="Lu W."/>
            <person name="Wang J."/>
            <person name="Liu H."/>
            <person name="Yang J."/>
            <person name="Yang F."/>
            <person name="Zhang X."/>
            <person name="Zhang J."/>
            <person name="Yang G."/>
            <person name="Wu H."/>
            <person name="Qu D."/>
            <person name="Dong J."/>
            <person name="Sun L."/>
            <person name="Xue Y."/>
            <person name="Zhao A."/>
            <person name="Gao Y."/>
            <person name="Zhu J."/>
            <person name="Kan B."/>
            <person name="Ding K."/>
            <person name="Chen S."/>
            <person name="Cheng H."/>
            <person name="Yao Z."/>
            <person name="He B."/>
            <person name="Chen R."/>
            <person name="Ma D."/>
            <person name="Qiang B."/>
            <person name="Wen Y."/>
            <person name="Hou Y."/>
            <person name="Yu J."/>
        </authorList>
    </citation>
    <scope>NUCLEOTIDE SEQUENCE [LARGE SCALE GENOMIC DNA]</scope>
    <source>
        <strain>301 / Serotype 2a</strain>
    </source>
</reference>
<reference key="2">
    <citation type="journal article" date="2003" name="Infect. Immun.">
        <title>Complete genome sequence and comparative genomics of Shigella flexneri serotype 2a strain 2457T.</title>
        <authorList>
            <person name="Wei J."/>
            <person name="Goldberg M.B."/>
            <person name="Burland V."/>
            <person name="Venkatesan M.M."/>
            <person name="Deng W."/>
            <person name="Fournier G."/>
            <person name="Mayhew G.F."/>
            <person name="Plunkett G. III"/>
            <person name="Rose D.J."/>
            <person name="Darling A."/>
            <person name="Mau B."/>
            <person name="Perna N.T."/>
            <person name="Payne S.M."/>
            <person name="Runyen-Janecky L.J."/>
            <person name="Zhou S."/>
            <person name="Schwartz D.C."/>
            <person name="Blattner F.R."/>
        </authorList>
    </citation>
    <scope>NUCLEOTIDE SEQUENCE [LARGE SCALE GENOMIC DNA]</scope>
    <source>
        <strain>ATCC 700930 / 2457T / Serotype 2a</strain>
    </source>
</reference>
<accession>Q83P30</accession>
<accession>Q7UAK8</accession>
<organism>
    <name type="scientific">Shigella flexneri</name>
    <dbReference type="NCBI Taxonomy" id="623"/>
    <lineage>
        <taxon>Bacteria</taxon>
        <taxon>Pseudomonadati</taxon>
        <taxon>Pseudomonadota</taxon>
        <taxon>Gammaproteobacteria</taxon>
        <taxon>Enterobacterales</taxon>
        <taxon>Enterobacteriaceae</taxon>
        <taxon>Shigella</taxon>
    </lineage>
</organism>
<feature type="chain" id="PRO_0000234028" description="HTH-type transcriptional regulator UlaR">
    <location>
        <begin position="1"/>
        <end position="251"/>
    </location>
</feature>
<feature type="domain" description="HTH deoR-type" evidence="1">
    <location>
        <begin position="3"/>
        <end position="58"/>
    </location>
</feature>
<feature type="DNA-binding region" description="H-T-H motif" evidence="1">
    <location>
        <begin position="20"/>
        <end position="39"/>
    </location>
</feature>